<protein>
    <recommendedName>
        <fullName evidence="1">Phosphoglucosamine mutase</fullName>
        <ecNumber evidence="1">5.4.2.10</ecNumber>
    </recommendedName>
</protein>
<comment type="function">
    <text evidence="1">Catalyzes the conversion of glucosamine-6-phosphate to glucosamine-1-phosphate.</text>
</comment>
<comment type="catalytic activity">
    <reaction evidence="1">
        <text>alpha-D-glucosamine 1-phosphate = D-glucosamine 6-phosphate</text>
        <dbReference type="Rhea" id="RHEA:23424"/>
        <dbReference type="ChEBI" id="CHEBI:58516"/>
        <dbReference type="ChEBI" id="CHEBI:58725"/>
        <dbReference type="EC" id="5.4.2.10"/>
    </reaction>
</comment>
<comment type="cofactor">
    <cofactor evidence="1">
        <name>Mg(2+)</name>
        <dbReference type="ChEBI" id="CHEBI:18420"/>
    </cofactor>
    <text evidence="1">Binds 1 Mg(2+) ion per subunit.</text>
</comment>
<comment type="PTM">
    <text evidence="1">Activated by phosphorylation.</text>
</comment>
<comment type="similarity">
    <text evidence="1">Belongs to the phosphohexose mutase family.</text>
</comment>
<gene>
    <name evidence="1" type="primary">glmM</name>
    <name type="ordered locus">Mmc1_0360</name>
</gene>
<accession>A0L4J3</accession>
<keyword id="KW-0413">Isomerase</keyword>
<keyword id="KW-0460">Magnesium</keyword>
<keyword id="KW-0479">Metal-binding</keyword>
<keyword id="KW-0597">Phosphoprotein</keyword>
<keyword id="KW-1185">Reference proteome</keyword>
<feature type="chain" id="PRO_0000305651" description="Phosphoglucosamine mutase">
    <location>
        <begin position="1"/>
        <end position="483"/>
    </location>
</feature>
<feature type="active site" description="Phosphoserine intermediate" evidence="1">
    <location>
        <position position="131"/>
    </location>
</feature>
<feature type="binding site" description="via phosphate group" evidence="1">
    <location>
        <position position="131"/>
    </location>
    <ligand>
        <name>Mg(2+)</name>
        <dbReference type="ChEBI" id="CHEBI:18420"/>
    </ligand>
</feature>
<feature type="binding site" evidence="1">
    <location>
        <position position="272"/>
    </location>
    <ligand>
        <name>Mg(2+)</name>
        <dbReference type="ChEBI" id="CHEBI:18420"/>
    </ligand>
</feature>
<feature type="binding site" evidence="1">
    <location>
        <position position="274"/>
    </location>
    <ligand>
        <name>Mg(2+)</name>
        <dbReference type="ChEBI" id="CHEBI:18420"/>
    </ligand>
</feature>
<feature type="binding site" evidence="1">
    <location>
        <position position="276"/>
    </location>
    <ligand>
        <name>Mg(2+)</name>
        <dbReference type="ChEBI" id="CHEBI:18420"/>
    </ligand>
</feature>
<feature type="modified residue" description="Phosphoserine" evidence="1">
    <location>
        <position position="131"/>
    </location>
</feature>
<name>GLMM_MAGMM</name>
<reference key="1">
    <citation type="journal article" date="2009" name="Appl. Environ. Microbiol.">
        <title>Complete genome sequence of the chemolithoautotrophic marine magnetotactic coccus strain MC-1.</title>
        <authorList>
            <person name="Schubbe S."/>
            <person name="Williams T.J."/>
            <person name="Xie G."/>
            <person name="Kiss H.E."/>
            <person name="Brettin T.S."/>
            <person name="Martinez D."/>
            <person name="Ross C.A."/>
            <person name="Schuler D."/>
            <person name="Cox B.L."/>
            <person name="Nealson K.H."/>
            <person name="Bazylinski D.A."/>
        </authorList>
    </citation>
    <scope>NUCLEOTIDE SEQUENCE [LARGE SCALE GENOMIC DNA]</scope>
    <source>
        <strain>ATCC BAA-1437 / JCM 17883 / MC-1</strain>
    </source>
</reference>
<organism>
    <name type="scientific">Magnetococcus marinus (strain ATCC BAA-1437 / JCM 17883 / MC-1)</name>
    <dbReference type="NCBI Taxonomy" id="156889"/>
    <lineage>
        <taxon>Bacteria</taxon>
        <taxon>Pseudomonadati</taxon>
        <taxon>Pseudomonadota</taxon>
        <taxon>Alphaproteobacteria</taxon>
        <taxon>Magnetococcales</taxon>
        <taxon>Magnetococcaceae</taxon>
        <taxon>Magnetococcus</taxon>
    </lineage>
</organism>
<sequence length="483" mass="52001">MVQNRAIFCFLSTIKSEETMTSESQPQVTQTRKFFGTDGIRGMANIHPMTPDLVLKLGRAAGHVFRVGDKRHTVIIGKDTRLSGYMFESALLAGLTSMGIHCLQVGPLPTPAIAFLTRALRADAGIMISASHNPFHDNGIKFFGPNGMKLPDELELEIERVLLSDEDLPMPTPHHLGRAHRIDDALGRYIEFAKTSFPKDLRLDGLRVVVDCAHGAAYKVAPAVLWELGAEVVTLGNHPNGTNINDGVGSLYPQEMVKRVQEVRADVGIAFDGDADRVVICDERGEILDGDVILAMSALEMKRKGVLRGDGVVATVMSNLGLERALAAEGLTLARTKVGDRYVLEHMLAHGFNLGGEQSGHLIFLDHNTTGDGLISALSVLALMTTQAQPLSKLANVMQRVPQVLQNVTIARGSDPMDDSRVVAAIAEAEAQLGTRGRILVRKSGTEPKVRVMVEGDDTAHITALASGVCEAIKRASNGFGEG</sequence>
<proteinExistence type="inferred from homology"/>
<evidence type="ECO:0000255" key="1">
    <source>
        <dbReference type="HAMAP-Rule" id="MF_01554"/>
    </source>
</evidence>
<dbReference type="EC" id="5.4.2.10" evidence="1"/>
<dbReference type="EMBL" id="CP000471">
    <property type="protein sequence ID" value="ABK42886.1"/>
    <property type="molecule type" value="Genomic_DNA"/>
</dbReference>
<dbReference type="SMR" id="A0L4J3"/>
<dbReference type="STRING" id="156889.Mmc1_0360"/>
<dbReference type="KEGG" id="mgm:Mmc1_0360"/>
<dbReference type="eggNOG" id="COG1109">
    <property type="taxonomic scope" value="Bacteria"/>
</dbReference>
<dbReference type="HOGENOM" id="CLU_016950_7_0_5"/>
<dbReference type="Proteomes" id="UP000002586">
    <property type="component" value="Chromosome"/>
</dbReference>
<dbReference type="GO" id="GO:0005829">
    <property type="term" value="C:cytosol"/>
    <property type="evidence" value="ECO:0007669"/>
    <property type="project" value="TreeGrafter"/>
</dbReference>
<dbReference type="GO" id="GO:0000287">
    <property type="term" value="F:magnesium ion binding"/>
    <property type="evidence" value="ECO:0007669"/>
    <property type="project" value="UniProtKB-UniRule"/>
</dbReference>
<dbReference type="GO" id="GO:0008966">
    <property type="term" value="F:phosphoglucosamine mutase activity"/>
    <property type="evidence" value="ECO:0007669"/>
    <property type="project" value="UniProtKB-UniRule"/>
</dbReference>
<dbReference type="GO" id="GO:0004615">
    <property type="term" value="F:phosphomannomutase activity"/>
    <property type="evidence" value="ECO:0007669"/>
    <property type="project" value="TreeGrafter"/>
</dbReference>
<dbReference type="GO" id="GO:0005975">
    <property type="term" value="P:carbohydrate metabolic process"/>
    <property type="evidence" value="ECO:0007669"/>
    <property type="project" value="InterPro"/>
</dbReference>
<dbReference type="GO" id="GO:0009252">
    <property type="term" value="P:peptidoglycan biosynthetic process"/>
    <property type="evidence" value="ECO:0007669"/>
    <property type="project" value="TreeGrafter"/>
</dbReference>
<dbReference type="GO" id="GO:0006048">
    <property type="term" value="P:UDP-N-acetylglucosamine biosynthetic process"/>
    <property type="evidence" value="ECO:0007669"/>
    <property type="project" value="TreeGrafter"/>
</dbReference>
<dbReference type="CDD" id="cd05802">
    <property type="entry name" value="GlmM"/>
    <property type="match status" value="1"/>
</dbReference>
<dbReference type="FunFam" id="3.30.310.50:FF:000001">
    <property type="entry name" value="Phosphoglucosamine mutase"/>
    <property type="match status" value="1"/>
</dbReference>
<dbReference type="FunFam" id="3.40.120.10:FF:000001">
    <property type="entry name" value="Phosphoglucosamine mutase"/>
    <property type="match status" value="1"/>
</dbReference>
<dbReference type="FunFam" id="3.40.120.10:FF:000002">
    <property type="entry name" value="Phosphoglucosamine mutase"/>
    <property type="match status" value="1"/>
</dbReference>
<dbReference type="Gene3D" id="3.40.120.10">
    <property type="entry name" value="Alpha-D-Glucose-1,6-Bisphosphate, subunit A, domain 3"/>
    <property type="match status" value="3"/>
</dbReference>
<dbReference type="Gene3D" id="3.30.310.50">
    <property type="entry name" value="Alpha-D-phosphohexomutase, C-terminal domain"/>
    <property type="match status" value="1"/>
</dbReference>
<dbReference type="HAMAP" id="MF_01554_B">
    <property type="entry name" value="GlmM_B"/>
    <property type="match status" value="1"/>
</dbReference>
<dbReference type="InterPro" id="IPR005844">
    <property type="entry name" value="A-D-PHexomutase_a/b/a-I"/>
</dbReference>
<dbReference type="InterPro" id="IPR016055">
    <property type="entry name" value="A-D-PHexomutase_a/b/a-I/II/III"/>
</dbReference>
<dbReference type="InterPro" id="IPR005845">
    <property type="entry name" value="A-D-PHexomutase_a/b/a-II"/>
</dbReference>
<dbReference type="InterPro" id="IPR005846">
    <property type="entry name" value="A-D-PHexomutase_a/b/a-III"/>
</dbReference>
<dbReference type="InterPro" id="IPR005843">
    <property type="entry name" value="A-D-PHexomutase_C"/>
</dbReference>
<dbReference type="InterPro" id="IPR036900">
    <property type="entry name" value="A-D-PHexomutase_C_sf"/>
</dbReference>
<dbReference type="InterPro" id="IPR016066">
    <property type="entry name" value="A-D-PHexomutase_CS"/>
</dbReference>
<dbReference type="InterPro" id="IPR005841">
    <property type="entry name" value="Alpha-D-phosphohexomutase_SF"/>
</dbReference>
<dbReference type="InterPro" id="IPR006352">
    <property type="entry name" value="GlmM_bact"/>
</dbReference>
<dbReference type="InterPro" id="IPR050060">
    <property type="entry name" value="Phosphoglucosamine_mutase"/>
</dbReference>
<dbReference type="NCBIfam" id="TIGR01455">
    <property type="entry name" value="glmM"/>
    <property type="match status" value="1"/>
</dbReference>
<dbReference type="NCBIfam" id="NF008139">
    <property type="entry name" value="PRK10887.1"/>
    <property type="match status" value="1"/>
</dbReference>
<dbReference type="PANTHER" id="PTHR42946:SF1">
    <property type="entry name" value="PHOSPHOGLUCOMUTASE (ALPHA-D-GLUCOSE-1,6-BISPHOSPHATE-DEPENDENT)"/>
    <property type="match status" value="1"/>
</dbReference>
<dbReference type="PANTHER" id="PTHR42946">
    <property type="entry name" value="PHOSPHOHEXOSE MUTASE"/>
    <property type="match status" value="1"/>
</dbReference>
<dbReference type="Pfam" id="PF02878">
    <property type="entry name" value="PGM_PMM_I"/>
    <property type="match status" value="1"/>
</dbReference>
<dbReference type="Pfam" id="PF02879">
    <property type="entry name" value="PGM_PMM_II"/>
    <property type="match status" value="1"/>
</dbReference>
<dbReference type="Pfam" id="PF02880">
    <property type="entry name" value="PGM_PMM_III"/>
    <property type="match status" value="1"/>
</dbReference>
<dbReference type="Pfam" id="PF00408">
    <property type="entry name" value="PGM_PMM_IV"/>
    <property type="match status" value="1"/>
</dbReference>
<dbReference type="PRINTS" id="PR00509">
    <property type="entry name" value="PGMPMM"/>
</dbReference>
<dbReference type="SUPFAM" id="SSF55957">
    <property type="entry name" value="Phosphoglucomutase, C-terminal domain"/>
    <property type="match status" value="1"/>
</dbReference>
<dbReference type="SUPFAM" id="SSF53738">
    <property type="entry name" value="Phosphoglucomutase, first 3 domains"/>
    <property type="match status" value="3"/>
</dbReference>
<dbReference type="PROSITE" id="PS00710">
    <property type="entry name" value="PGM_PMM"/>
    <property type="match status" value="1"/>
</dbReference>